<reference key="1">
    <citation type="journal article" date="1998" name="DNA Res.">
        <title>Sequence analysis of the Bacillus subtilis 168 chromosome region between the sspC and odhA loci (184 degrees-180 degrees).</title>
        <authorList>
            <person name="Ghim S.-Y."/>
            <person name="Choi S.-K."/>
            <person name="Shin B.-S."/>
            <person name="Jeong Y.-M."/>
            <person name="Sorokin A."/>
            <person name="Ehrlich S.D."/>
            <person name="Park S.-H."/>
        </authorList>
    </citation>
    <scope>NUCLEOTIDE SEQUENCE [GENOMIC DNA]</scope>
    <source>
        <strain>168</strain>
    </source>
</reference>
<reference key="2">
    <citation type="journal article" date="1997" name="Nature">
        <title>The complete genome sequence of the Gram-positive bacterium Bacillus subtilis.</title>
        <authorList>
            <person name="Kunst F."/>
            <person name="Ogasawara N."/>
            <person name="Moszer I."/>
            <person name="Albertini A.M."/>
            <person name="Alloni G."/>
            <person name="Azevedo V."/>
            <person name="Bertero M.G."/>
            <person name="Bessieres P."/>
            <person name="Bolotin A."/>
            <person name="Borchert S."/>
            <person name="Borriss R."/>
            <person name="Boursier L."/>
            <person name="Brans A."/>
            <person name="Braun M."/>
            <person name="Brignell S.C."/>
            <person name="Bron S."/>
            <person name="Brouillet S."/>
            <person name="Bruschi C.V."/>
            <person name="Caldwell B."/>
            <person name="Capuano V."/>
            <person name="Carter N.M."/>
            <person name="Choi S.-K."/>
            <person name="Codani J.-J."/>
            <person name="Connerton I.F."/>
            <person name="Cummings N.J."/>
            <person name="Daniel R.A."/>
            <person name="Denizot F."/>
            <person name="Devine K.M."/>
            <person name="Duesterhoeft A."/>
            <person name="Ehrlich S.D."/>
            <person name="Emmerson P.T."/>
            <person name="Entian K.-D."/>
            <person name="Errington J."/>
            <person name="Fabret C."/>
            <person name="Ferrari E."/>
            <person name="Foulger D."/>
            <person name="Fritz C."/>
            <person name="Fujita M."/>
            <person name="Fujita Y."/>
            <person name="Fuma S."/>
            <person name="Galizzi A."/>
            <person name="Galleron N."/>
            <person name="Ghim S.-Y."/>
            <person name="Glaser P."/>
            <person name="Goffeau A."/>
            <person name="Golightly E.J."/>
            <person name="Grandi G."/>
            <person name="Guiseppi G."/>
            <person name="Guy B.J."/>
            <person name="Haga K."/>
            <person name="Haiech J."/>
            <person name="Harwood C.R."/>
            <person name="Henaut A."/>
            <person name="Hilbert H."/>
            <person name="Holsappel S."/>
            <person name="Hosono S."/>
            <person name="Hullo M.-F."/>
            <person name="Itaya M."/>
            <person name="Jones L.-M."/>
            <person name="Joris B."/>
            <person name="Karamata D."/>
            <person name="Kasahara Y."/>
            <person name="Klaerr-Blanchard M."/>
            <person name="Klein C."/>
            <person name="Kobayashi Y."/>
            <person name="Koetter P."/>
            <person name="Koningstein G."/>
            <person name="Krogh S."/>
            <person name="Kumano M."/>
            <person name="Kurita K."/>
            <person name="Lapidus A."/>
            <person name="Lardinois S."/>
            <person name="Lauber J."/>
            <person name="Lazarevic V."/>
            <person name="Lee S.-M."/>
            <person name="Levine A."/>
            <person name="Liu H."/>
            <person name="Masuda S."/>
            <person name="Mauel C."/>
            <person name="Medigue C."/>
            <person name="Medina N."/>
            <person name="Mellado R.P."/>
            <person name="Mizuno M."/>
            <person name="Moestl D."/>
            <person name="Nakai S."/>
            <person name="Noback M."/>
            <person name="Noone D."/>
            <person name="O'Reilly M."/>
            <person name="Ogawa K."/>
            <person name="Ogiwara A."/>
            <person name="Oudega B."/>
            <person name="Park S.-H."/>
            <person name="Parro V."/>
            <person name="Pohl T.M."/>
            <person name="Portetelle D."/>
            <person name="Porwollik S."/>
            <person name="Prescott A.M."/>
            <person name="Presecan E."/>
            <person name="Pujic P."/>
            <person name="Purnelle B."/>
            <person name="Rapoport G."/>
            <person name="Rey M."/>
            <person name="Reynolds S."/>
            <person name="Rieger M."/>
            <person name="Rivolta C."/>
            <person name="Rocha E."/>
            <person name="Roche B."/>
            <person name="Rose M."/>
            <person name="Sadaie Y."/>
            <person name="Sato T."/>
            <person name="Scanlan E."/>
            <person name="Schleich S."/>
            <person name="Schroeter R."/>
            <person name="Scoffone F."/>
            <person name="Sekiguchi J."/>
            <person name="Sekowska A."/>
            <person name="Seror S.J."/>
            <person name="Serror P."/>
            <person name="Shin B.-S."/>
            <person name="Soldo B."/>
            <person name="Sorokin A."/>
            <person name="Tacconi E."/>
            <person name="Takagi T."/>
            <person name="Takahashi H."/>
            <person name="Takemaru K."/>
            <person name="Takeuchi M."/>
            <person name="Tamakoshi A."/>
            <person name="Tanaka T."/>
            <person name="Terpstra P."/>
            <person name="Tognoni A."/>
            <person name="Tosato V."/>
            <person name="Uchiyama S."/>
            <person name="Vandenbol M."/>
            <person name="Vannier F."/>
            <person name="Vassarotti A."/>
            <person name="Viari A."/>
            <person name="Wambutt R."/>
            <person name="Wedler E."/>
            <person name="Wedler H."/>
            <person name="Weitzenegger T."/>
            <person name="Winters P."/>
            <person name="Wipat A."/>
            <person name="Yamamoto H."/>
            <person name="Yamane K."/>
            <person name="Yasumoto K."/>
            <person name="Yata K."/>
            <person name="Yoshida K."/>
            <person name="Yoshikawa H.-F."/>
            <person name="Zumstein E."/>
            <person name="Yoshikawa H."/>
            <person name="Danchin A."/>
        </authorList>
    </citation>
    <scope>NUCLEOTIDE SEQUENCE [LARGE SCALE GENOMIC DNA]</scope>
    <source>
        <strain>168</strain>
    </source>
</reference>
<reference key="3">
    <citation type="journal article" date="2000" name="Biochem. J.">
        <title>A novel lysine 2,3-aminomutase encoded by the yodO gene of bacillus subtilis: characterization and the observation of organic radical intermediates.</title>
        <authorList>
            <person name="Chen D."/>
            <person name="Ruzicka F.J."/>
            <person name="Frey P.A."/>
        </authorList>
    </citation>
    <scope>PROTEIN SEQUENCE OF 1-10</scope>
    <scope>CHARACTERIZATION</scope>
    <scope>SUBUNIT</scope>
    <scope>COFACTOR</scope>
    <scope>MASS SPECTROMETRY</scope>
    <source>
        <strain>ATCC 27505 / K49</strain>
    </source>
</reference>
<reference key="4">
    <citation type="journal article" date="2001" name="Biochemistry">
        <title>Identification of lysine 346 as a functionally important residue for pyridoxal 5'-phosphate binding and catalysis in lysine 2,3-aminomutase from Bacillus subtilis.</title>
        <authorList>
            <person name="Chen D."/>
            <person name="Frey P.A."/>
        </authorList>
    </citation>
    <scope>MUTAGENESIS OF LYS-290; LYS-346 AND LYS-361</scope>
</reference>
<reference key="5">
    <citation type="journal article" date="2011" name="Appl. Microbiol. Biotechnol.">
        <title>Bacterial abl-like genes: production of the archaeal osmolyte N(epsilon)-acetyl-beta-lysine by homologous overexpression of the yodP-kamA genes in Bacillus subtilis.</title>
        <authorList>
            <person name="Muller S."/>
            <person name="Hoffmann T."/>
            <person name="Santos H."/>
            <person name="Saum S.H."/>
            <person name="Bremer E."/>
            <person name="Muller V."/>
        </authorList>
    </citation>
    <scope>FUNCTION</scope>
    <scope>BIOTECHNOLOGY</scope>
    <scope>DISRUPTION PHENOTYPE</scope>
    <source>
        <strain>168</strain>
    </source>
</reference>
<accession>O34676</accession>
<accession>O30469</accession>
<evidence type="ECO:0000250" key="1"/>
<evidence type="ECO:0000255" key="2">
    <source>
        <dbReference type="PROSITE-ProRule" id="PRU01266"/>
    </source>
</evidence>
<evidence type="ECO:0000269" key="3">
    <source>
    </source>
</evidence>
<evidence type="ECO:0000269" key="4">
    <source>
    </source>
</evidence>
<evidence type="ECO:0000269" key="5">
    <source>
    </source>
</evidence>
<evidence type="ECO:0000305" key="6"/>
<keyword id="KW-0004">4Fe-4S</keyword>
<keyword id="KW-0903">Direct protein sequencing</keyword>
<keyword id="KW-0408">Iron</keyword>
<keyword id="KW-0411">Iron-sulfur</keyword>
<keyword id="KW-0413">Isomerase</keyword>
<keyword id="KW-0479">Metal-binding</keyword>
<keyword id="KW-0663">Pyridoxal phosphate</keyword>
<keyword id="KW-1185">Reference proteome</keyword>
<keyword id="KW-0949">S-adenosyl-L-methionine</keyword>
<name>KAMA_BACSU</name>
<organism>
    <name type="scientific">Bacillus subtilis (strain 168)</name>
    <dbReference type="NCBI Taxonomy" id="224308"/>
    <lineage>
        <taxon>Bacteria</taxon>
        <taxon>Bacillati</taxon>
        <taxon>Bacillota</taxon>
        <taxon>Bacilli</taxon>
        <taxon>Bacillales</taxon>
        <taxon>Bacillaceae</taxon>
        <taxon>Bacillus</taxon>
    </lineage>
</organism>
<proteinExistence type="evidence at protein level"/>
<protein>
    <recommendedName>
        <fullName>L-lysine 2,3-aminomutase</fullName>
        <shortName>LAM</shortName>
        <ecNumber>5.4.3.2</ecNumber>
    </recommendedName>
    <alternativeName>
        <fullName>KAM</fullName>
    </alternativeName>
</protein>
<dbReference type="EC" id="5.4.3.2"/>
<dbReference type="EMBL" id="AF015775">
    <property type="protein sequence ID" value="AAB72069.1"/>
    <property type="molecule type" value="Genomic_DNA"/>
</dbReference>
<dbReference type="EMBL" id="AF006665">
    <property type="protein sequence ID" value="AAB81159.1"/>
    <property type="molecule type" value="Genomic_DNA"/>
</dbReference>
<dbReference type="EMBL" id="AL009126">
    <property type="protein sequence ID" value="CAB13860.1"/>
    <property type="molecule type" value="Genomic_DNA"/>
</dbReference>
<dbReference type="PIR" id="B69904">
    <property type="entry name" value="B69904"/>
</dbReference>
<dbReference type="RefSeq" id="NP_389850.1">
    <property type="nucleotide sequence ID" value="NC_000964.3"/>
</dbReference>
<dbReference type="SMR" id="O34676"/>
<dbReference type="FunCoup" id="O34676">
    <property type="interactions" value="126"/>
</dbReference>
<dbReference type="STRING" id="224308.BSU19690"/>
<dbReference type="PaxDb" id="224308-BSU19690"/>
<dbReference type="EnsemblBacteria" id="CAB13860">
    <property type="protein sequence ID" value="CAB13860"/>
    <property type="gene ID" value="BSU_19690"/>
</dbReference>
<dbReference type="GeneID" id="940040"/>
<dbReference type="KEGG" id="bsu:BSU19690"/>
<dbReference type="PATRIC" id="fig|224308.179.peg.2156"/>
<dbReference type="eggNOG" id="COG1509">
    <property type="taxonomic scope" value="Bacteria"/>
</dbReference>
<dbReference type="InParanoid" id="O34676"/>
<dbReference type="OrthoDB" id="9768064at2"/>
<dbReference type="PhylomeDB" id="O34676"/>
<dbReference type="BioCyc" id="BSUB:BSU19690-MONOMER"/>
<dbReference type="UniPathway" id="UPA00870"/>
<dbReference type="Proteomes" id="UP000001570">
    <property type="component" value="Chromosome"/>
</dbReference>
<dbReference type="GO" id="GO:0051539">
    <property type="term" value="F:4 iron, 4 sulfur cluster binding"/>
    <property type="evidence" value="ECO:0000318"/>
    <property type="project" value="GO_Central"/>
</dbReference>
<dbReference type="GO" id="GO:0016869">
    <property type="term" value="F:intramolecular aminotransferase activity"/>
    <property type="evidence" value="ECO:0000318"/>
    <property type="project" value="GO_Central"/>
</dbReference>
<dbReference type="GO" id="GO:0050066">
    <property type="term" value="F:L-lysine 2,3-aminomutase activity"/>
    <property type="evidence" value="ECO:0007669"/>
    <property type="project" value="UniProtKB-EC"/>
</dbReference>
<dbReference type="GO" id="GO:0046872">
    <property type="term" value="F:metal ion binding"/>
    <property type="evidence" value="ECO:0007669"/>
    <property type="project" value="UniProtKB-KW"/>
</dbReference>
<dbReference type="GO" id="GO:0019475">
    <property type="term" value="P:L-lysine catabolic process to acetate"/>
    <property type="evidence" value="ECO:0007669"/>
    <property type="project" value="UniProtKB-UniPathway"/>
</dbReference>
<dbReference type="CDD" id="cd01335">
    <property type="entry name" value="Radical_SAM"/>
    <property type="match status" value="1"/>
</dbReference>
<dbReference type="FunFam" id="3.20.20.70:FF:000095">
    <property type="entry name" value="Lysine 2,3-aminomutase"/>
    <property type="match status" value="1"/>
</dbReference>
<dbReference type="Gene3D" id="6.10.140.1170">
    <property type="match status" value="1"/>
</dbReference>
<dbReference type="Gene3D" id="6.20.120.40">
    <property type="match status" value="1"/>
</dbReference>
<dbReference type="Gene3D" id="3.20.20.70">
    <property type="entry name" value="Aldolase class I"/>
    <property type="match status" value="1"/>
</dbReference>
<dbReference type="InterPro" id="IPR013785">
    <property type="entry name" value="Aldolase_TIM"/>
</dbReference>
<dbReference type="InterPro" id="IPR025895">
    <property type="entry name" value="LAM_C_dom"/>
</dbReference>
<dbReference type="InterPro" id="IPR003739">
    <property type="entry name" value="Lys_aminomutase/Glu_NH3_mut"/>
</dbReference>
<dbReference type="InterPro" id="IPR022459">
    <property type="entry name" value="Lysine_aminomutase"/>
</dbReference>
<dbReference type="InterPro" id="IPR007197">
    <property type="entry name" value="rSAM"/>
</dbReference>
<dbReference type="NCBIfam" id="TIGR00238">
    <property type="entry name" value="KamA family radical SAM protein"/>
    <property type="match status" value="1"/>
</dbReference>
<dbReference type="NCBIfam" id="TIGR03820">
    <property type="entry name" value="lys_2_3_AblA"/>
    <property type="match status" value="1"/>
</dbReference>
<dbReference type="PANTHER" id="PTHR30538:SF1">
    <property type="entry name" value="L-LYSINE 2,3-AMINOMUTASE"/>
    <property type="match status" value="1"/>
</dbReference>
<dbReference type="PANTHER" id="PTHR30538">
    <property type="entry name" value="LYSINE 2,3-AMINOMUTASE-RELATED"/>
    <property type="match status" value="1"/>
</dbReference>
<dbReference type="Pfam" id="PF12544">
    <property type="entry name" value="LAM_C"/>
    <property type="match status" value="1"/>
</dbReference>
<dbReference type="Pfam" id="PF04055">
    <property type="entry name" value="Radical_SAM"/>
    <property type="match status" value="1"/>
</dbReference>
<dbReference type="SFLD" id="SFLDF00283">
    <property type="entry name" value="L-lysine_2_3-aminomutase_(LAM"/>
    <property type="match status" value="1"/>
</dbReference>
<dbReference type="SFLD" id="SFLDG01070">
    <property type="entry name" value="PLP-dependent"/>
    <property type="match status" value="1"/>
</dbReference>
<dbReference type="SUPFAM" id="SSF102114">
    <property type="entry name" value="Radical SAM enzymes"/>
    <property type="match status" value="1"/>
</dbReference>
<dbReference type="PROSITE" id="PS51918">
    <property type="entry name" value="RADICAL_SAM"/>
    <property type="match status" value="1"/>
</dbReference>
<comment type="function">
    <text evidence="5">Catalyzes the interconversion of L-alpha-lysine and L-beta-lysine.</text>
</comment>
<comment type="catalytic activity">
    <reaction>
        <text>L-lysine = (3S)-3,6-diaminohexanoate</text>
        <dbReference type="Rhea" id="RHEA:19177"/>
        <dbReference type="ChEBI" id="CHEBI:32551"/>
        <dbReference type="ChEBI" id="CHEBI:57434"/>
        <dbReference type="EC" id="5.4.3.2"/>
    </reaction>
</comment>
<comment type="cofactor">
    <cofactor evidence="3">
        <name>[4Fe-4S] cluster</name>
        <dbReference type="ChEBI" id="CHEBI:49883"/>
    </cofactor>
    <text evidence="3">Binds 1 [4Fe-4S] cluster per subunit. The cluster is coordinated with 3 cysteines and an exchangeable S-adenosyl-L-methionine.</text>
</comment>
<comment type="cofactor">
    <cofactor evidence="3">
        <name>pyridoxal 5'-phosphate</name>
        <dbReference type="ChEBI" id="CHEBI:597326"/>
    </cofactor>
</comment>
<comment type="biophysicochemical properties">
    <kinetics>
        <KM>8 mM for L-lysine</KM>
    </kinetics>
</comment>
<comment type="pathway">
    <text>Amino-acid degradation; L-lysine degradation via acetate pathway.</text>
</comment>
<comment type="subunit">
    <text evidence="3">Homotetramer.</text>
</comment>
<comment type="mass spectrometry"/>
<comment type="disruption phenotype">
    <text evidence="5">Deletion of the genomic region encompassing the entire yodT-yodS-yodR-yodQ-yodP-kamA gene cluster has no noticeable effect on growth either in rich or minimal medium, does not affect sporulation, and does not cause osmotic sensitivity or influence the compatible solute pool of this soil bacterium.</text>
</comment>
<comment type="biotechnology">
    <text evidence="5">The use of KamA and YodP from B.subtilis for N6-acetyl-beta-lysine synthesis opens the bottleneck for the large-scale production of N6-acetyl-beta-lysine to investigate its properties as a compatible solute.</text>
</comment>
<comment type="similarity">
    <text evidence="6">Belongs to the radical SAM superfamily. KamA family.</text>
</comment>
<sequence>MKNKWYKPKRHWKEIELWKDVPEEKWNDWLWQLTHTVRTLDDLKKVINLTEDEEEGVRISTKTIPLNITPYYASLMDPDNPRCPVRMQSVPLSEEMHKTKYDLEDPLHEDEDSPVPGLTHRYPDRVLFLVTNQCSMYCRYCTRRRFSGQIGMGVPKKQLDAAIAYIRETPEIRDCLISGGDGLLINDQILEYILKELRSIPHLEVIRIGTRAPVVFPQRITDHLCEILKKYHPVWLNTHFNTSIEMTEESVEACEKLVNAGVPVGNQAVVLAGINDSVPIMKKLMHDLVKIRVRPYYIYQCDLSEGIGHFRAPVSKGLEIIEGLRGHTSGYAVPTFVVDAPGGGGKIALQPNYVLSQSPDKVILRNFEGVITSYPEPENYIPNQADAYFESVFPETADKKEPIGLSAIFADKEVSFTPENVDRIKRREAYIANPEHETLKDRREKRDQLKEKKFLAQQKKQKETECGGDSS</sequence>
<feature type="chain" id="PRO_0000172286" description="L-lysine 2,3-aminomutase">
    <location>
        <begin position="1"/>
        <end position="471"/>
    </location>
</feature>
<feature type="domain" description="Radical SAM core" evidence="2">
    <location>
        <begin position="120"/>
        <end position="332"/>
    </location>
</feature>
<feature type="binding site" evidence="1">
    <location>
        <position position="134"/>
    </location>
    <ligand>
        <name>[4Fe-4S] cluster</name>
        <dbReference type="ChEBI" id="CHEBI:49883"/>
        <note>4Fe-4S-S-AdoMet</note>
    </ligand>
</feature>
<feature type="binding site" evidence="1">
    <location>
        <position position="138"/>
    </location>
    <ligand>
        <name>[4Fe-4S] cluster</name>
        <dbReference type="ChEBI" id="CHEBI:49883"/>
        <note>4Fe-4S-S-AdoMet</note>
    </ligand>
</feature>
<feature type="binding site" evidence="1">
    <location>
        <position position="141"/>
    </location>
    <ligand>
        <name>[4Fe-4S] cluster</name>
        <dbReference type="ChEBI" id="CHEBI:49883"/>
        <note>4Fe-4S-S-AdoMet</note>
    </ligand>
</feature>
<feature type="modified residue" description="N6-(pyridoxal phosphate)lysine">
    <location>
        <position position="346"/>
    </location>
</feature>
<feature type="mutagenesis site" description="More than 95% loss of activity, and half of normal PLP binding capacity." evidence="4">
    <original>K</original>
    <variation>Q</variation>
    <location>
        <position position="290"/>
    </location>
</feature>
<feature type="mutagenesis site" description="No activity and no bound PLP." evidence="4">
    <original>K</original>
    <variation>Q</variation>
    <location>
        <position position="346"/>
    </location>
</feature>
<feature type="mutagenesis site" description="95% loss of activity, normal PLP binding capacity." evidence="4">
    <original>K</original>
    <variation>Q</variation>
    <location>
        <position position="361"/>
    </location>
</feature>
<feature type="sequence conflict" description="In Ref. 1; AAB81159." evidence="6" ref="1">
    <original>P</original>
    <variation>R</variation>
    <location>
        <position position="114"/>
    </location>
</feature>
<feature type="sequence conflict" description="In Ref. 1; AAB81159." evidence="6" ref="1">
    <original>K</original>
    <variation>R</variation>
    <location>
        <position position="445"/>
    </location>
</feature>
<gene>
    <name type="primary">kamA</name>
    <name type="ordered locus">BSU19690</name>
</gene>